<dbReference type="EC" id="6.5.1.4" evidence="1"/>
<dbReference type="EMBL" id="CP001063">
    <property type="protein sequence ID" value="ACD10473.1"/>
    <property type="molecule type" value="Genomic_DNA"/>
</dbReference>
<dbReference type="RefSeq" id="WP_012421692.1">
    <property type="nucleotide sequence ID" value="NC_010658.1"/>
</dbReference>
<dbReference type="SMR" id="B2U3M8"/>
<dbReference type="STRING" id="344609.SbBS512_E3800"/>
<dbReference type="KEGG" id="sbc:SbBS512_E3800"/>
<dbReference type="HOGENOM" id="CLU_027882_0_0_6"/>
<dbReference type="Proteomes" id="UP000001030">
    <property type="component" value="Chromosome"/>
</dbReference>
<dbReference type="GO" id="GO:0005737">
    <property type="term" value="C:cytoplasm"/>
    <property type="evidence" value="ECO:0007669"/>
    <property type="project" value="UniProtKB-SubCell"/>
</dbReference>
<dbReference type="GO" id="GO:0005524">
    <property type="term" value="F:ATP binding"/>
    <property type="evidence" value="ECO:0007669"/>
    <property type="project" value="UniProtKB-KW"/>
</dbReference>
<dbReference type="GO" id="GO:0003963">
    <property type="term" value="F:RNA-3'-phosphate cyclase activity"/>
    <property type="evidence" value="ECO:0007669"/>
    <property type="project" value="UniProtKB-UniRule"/>
</dbReference>
<dbReference type="GO" id="GO:0006396">
    <property type="term" value="P:RNA processing"/>
    <property type="evidence" value="ECO:0007669"/>
    <property type="project" value="InterPro"/>
</dbReference>
<dbReference type="FunFam" id="3.65.10.20:FF:000002">
    <property type="entry name" value="GM19193"/>
    <property type="match status" value="1"/>
</dbReference>
<dbReference type="FunFam" id="3.30.360.20:FF:000003">
    <property type="entry name" value="RNA 3'-terminal phosphate cyclase"/>
    <property type="match status" value="1"/>
</dbReference>
<dbReference type="Gene3D" id="3.65.10.20">
    <property type="entry name" value="RNA 3'-terminal phosphate cyclase domain"/>
    <property type="match status" value="1"/>
</dbReference>
<dbReference type="Gene3D" id="3.30.360.20">
    <property type="entry name" value="RNA 3'-terminal phosphate cyclase, insert domain"/>
    <property type="match status" value="1"/>
</dbReference>
<dbReference type="HAMAP" id="MF_00200">
    <property type="entry name" value="RTC"/>
    <property type="match status" value="1"/>
</dbReference>
<dbReference type="InterPro" id="IPR013791">
    <property type="entry name" value="RNA3'-term_phos_cycl_insert"/>
</dbReference>
<dbReference type="InterPro" id="IPR023797">
    <property type="entry name" value="RNA3'_phos_cyclase_dom"/>
</dbReference>
<dbReference type="InterPro" id="IPR037136">
    <property type="entry name" value="RNA3'_phos_cyclase_dom_sf"/>
</dbReference>
<dbReference type="InterPro" id="IPR000228">
    <property type="entry name" value="RNA3'_term_phos_cyc"/>
</dbReference>
<dbReference type="InterPro" id="IPR017770">
    <property type="entry name" value="RNA3'_term_phos_cyc_type_1"/>
</dbReference>
<dbReference type="InterPro" id="IPR020719">
    <property type="entry name" value="RNA3'_term_phos_cycl-like_CS"/>
</dbReference>
<dbReference type="InterPro" id="IPR013792">
    <property type="entry name" value="RNA3'P_cycl/enolpyr_Trfase_a/b"/>
</dbReference>
<dbReference type="InterPro" id="IPR036553">
    <property type="entry name" value="RPTC_insert"/>
</dbReference>
<dbReference type="NCBIfam" id="NF003246">
    <property type="entry name" value="PRK04204.1-2"/>
    <property type="match status" value="1"/>
</dbReference>
<dbReference type="NCBIfam" id="NF003247">
    <property type="entry name" value="PRK04204.1-3"/>
    <property type="match status" value="1"/>
</dbReference>
<dbReference type="NCBIfam" id="TIGR03399">
    <property type="entry name" value="RNA_3prim_cycl"/>
    <property type="match status" value="1"/>
</dbReference>
<dbReference type="PANTHER" id="PTHR11096">
    <property type="entry name" value="RNA 3' TERMINAL PHOSPHATE CYCLASE"/>
    <property type="match status" value="1"/>
</dbReference>
<dbReference type="PANTHER" id="PTHR11096:SF0">
    <property type="entry name" value="RNA 3'-TERMINAL PHOSPHATE CYCLASE"/>
    <property type="match status" value="1"/>
</dbReference>
<dbReference type="Pfam" id="PF01137">
    <property type="entry name" value="RTC"/>
    <property type="match status" value="1"/>
</dbReference>
<dbReference type="Pfam" id="PF05189">
    <property type="entry name" value="RTC_insert"/>
    <property type="match status" value="1"/>
</dbReference>
<dbReference type="PIRSF" id="PIRSF005378">
    <property type="entry name" value="RNA3'_term_phos_cycl_euk"/>
    <property type="match status" value="1"/>
</dbReference>
<dbReference type="SUPFAM" id="SSF55205">
    <property type="entry name" value="EPT/RTPC-like"/>
    <property type="match status" value="2"/>
</dbReference>
<dbReference type="SUPFAM" id="SSF52913">
    <property type="entry name" value="RNA 3'-terminal phosphate cyclase, RPTC, insert domain"/>
    <property type="match status" value="1"/>
</dbReference>
<dbReference type="PROSITE" id="PS01287">
    <property type="entry name" value="RTC"/>
    <property type="match status" value="1"/>
</dbReference>
<reference key="1">
    <citation type="submission" date="2008-05" db="EMBL/GenBank/DDBJ databases">
        <title>Complete sequence of Shigella boydii serotype 18 strain BS512.</title>
        <authorList>
            <person name="Rasko D.A."/>
            <person name="Rosovitz M."/>
            <person name="Maurelli A.T."/>
            <person name="Myers G."/>
            <person name="Seshadri R."/>
            <person name="Cer R."/>
            <person name="Jiang L."/>
            <person name="Ravel J."/>
            <person name="Sebastian Y."/>
        </authorList>
    </citation>
    <scope>NUCLEOTIDE SEQUENCE [LARGE SCALE GENOMIC DNA]</scope>
    <source>
        <strain>CDC 3083-94 / BS512</strain>
    </source>
</reference>
<evidence type="ECO:0000255" key="1">
    <source>
        <dbReference type="HAMAP-Rule" id="MF_00200"/>
    </source>
</evidence>
<comment type="function">
    <text evidence="1">Catalyzes the conversion of 3'-phosphate to a 2',3'-cyclic phosphodiester at the end of RNA. The mechanism of action of the enzyme occurs in 3 steps: (A) adenylation of the enzyme by ATP; (B) transfer of adenylate to an RNA-N3'P to produce RNA-N3'PP5'A; (C) and attack of the adjacent 2'-hydroxyl on the 3'-phosphorus in the diester linkage to produce the cyclic end product. The biological role of this enzyme is unknown but it is likely to function in some aspects of cellular RNA processing.</text>
</comment>
<comment type="catalytic activity">
    <reaction evidence="1">
        <text>a 3'-end 3'-phospho-ribonucleotide-RNA + ATP = a 3'-end 2',3'-cyclophospho-ribonucleotide-RNA + AMP + diphosphate</text>
        <dbReference type="Rhea" id="RHEA:23976"/>
        <dbReference type="Rhea" id="RHEA-COMP:10463"/>
        <dbReference type="Rhea" id="RHEA-COMP:10464"/>
        <dbReference type="ChEBI" id="CHEBI:30616"/>
        <dbReference type="ChEBI" id="CHEBI:33019"/>
        <dbReference type="ChEBI" id="CHEBI:83062"/>
        <dbReference type="ChEBI" id="CHEBI:83064"/>
        <dbReference type="ChEBI" id="CHEBI:456215"/>
        <dbReference type="EC" id="6.5.1.4"/>
    </reaction>
</comment>
<comment type="subcellular location">
    <subcellularLocation>
        <location evidence="1">Cytoplasm</location>
    </subcellularLocation>
</comment>
<comment type="similarity">
    <text evidence="1">Belongs to the RNA 3'-terminal cyclase family. Type 1 subfamily.</text>
</comment>
<gene>
    <name evidence="1" type="primary">rtcA</name>
    <name type="ordered locus">SbBS512_E3800</name>
</gene>
<protein>
    <recommendedName>
        <fullName evidence="1">RNA 3'-terminal phosphate cyclase</fullName>
        <shortName evidence="1">RNA cyclase</shortName>
        <shortName evidence="1">RNA-3'-phosphate cyclase</shortName>
        <ecNumber evidence="1">6.5.1.4</ecNumber>
    </recommendedName>
</protein>
<name>RTCA_SHIB3</name>
<accession>B2U3M8</accession>
<feature type="chain" id="PRO_1000099355" description="RNA 3'-terminal phosphate cyclase">
    <location>
        <begin position="1"/>
        <end position="338"/>
    </location>
</feature>
<feature type="active site" description="Tele-AMP-histidine intermediate" evidence="1">
    <location>
        <position position="308"/>
    </location>
</feature>
<feature type="binding site" evidence="1">
    <location>
        <position position="103"/>
    </location>
    <ligand>
        <name>ATP</name>
        <dbReference type="ChEBI" id="CHEBI:30616"/>
    </ligand>
</feature>
<feature type="binding site" evidence="1">
    <location>
        <begin position="283"/>
        <end position="287"/>
    </location>
    <ligand>
        <name>ATP</name>
        <dbReference type="ChEBI" id="CHEBI:30616"/>
    </ligand>
</feature>
<keyword id="KW-0067">ATP-binding</keyword>
<keyword id="KW-0963">Cytoplasm</keyword>
<keyword id="KW-0436">Ligase</keyword>
<keyword id="KW-0547">Nucleotide-binding</keyword>
<keyword id="KW-1185">Reference proteome</keyword>
<organism>
    <name type="scientific">Shigella boydii serotype 18 (strain CDC 3083-94 / BS512)</name>
    <dbReference type="NCBI Taxonomy" id="344609"/>
    <lineage>
        <taxon>Bacteria</taxon>
        <taxon>Pseudomonadati</taxon>
        <taxon>Pseudomonadota</taxon>
        <taxon>Gammaproteobacteria</taxon>
        <taxon>Enterobacterales</taxon>
        <taxon>Enterobacteriaceae</taxon>
        <taxon>Shigella</taxon>
    </lineage>
</organism>
<sequence length="338" mass="35892">MKRMIALDGAQGEGGGQILRAALSLSMITGQPFTITSIRAGRAKPGLLRQHLTAVKAAAEICRATVEGAELGSQRLVFRPGAVRGGEYRFAIGSAGSCTLVLQTVLPALWFADGPSRVEVSGGTDNPSAPPADFIRRVLEPLLAKIGIHQQTTLLRHGFYPAGGGVVATEVSPVASFNTLQLGERGNIVQMRGEVLLAGVPRHVAEREIATLAGSFSLHEQNIHNLPRDQGPGNTVSLEVESENITERFFVVGEKRVSAEVVAAQLVKEVKRYLASPAAVGEYLADQLVLPMALAGAGEFTVAHPSCHLLTNIAVVERFLPVRFGLIETDGVTRVSIE</sequence>
<proteinExistence type="inferred from homology"/>